<evidence type="ECO:0000255" key="1">
    <source>
        <dbReference type="HAMAP-Rule" id="MF_00508"/>
    </source>
</evidence>
<evidence type="ECO:0000305" key="2"/>
<gene>
    <name evidence="1" type="primary">rpsJ</name>
    <name type="ordered locus">SSU98_0070</name>
</gene>
<reference key="1">
    <citation type="journal article" date="2007" name="PLoS ONE">
        <title>A glimpse of streptococcal toxic shock syndrome from comparative genomics of S. suis 2 Chinese isolates.</title>
        <authorList>
            <person name="Chen C."/>
            <person name="Tang J."/>
            <person name="Dong W."/>
            <person name="Wang C."/>
            <person name="Feng Y."/>
            <person name="Wang J."/>
            <person name="Zheng F."/>
            <person name="Pan X."/>
            <person name="Liu D."/>
            <person name="Li M."/>
            <person name="Song Y."/>
            <person name="Zhu X."/>
            <person name="Sun H."/>
            <person name="Feng T."/>
            <person name="Guo Z."/>
            <person name="Ju A."/>
            <person name="Ge J."/>
            <person name="Dong Y."/>
            <person name="Sun W."/>
            <person name="Jiang Y."/>
            <person name="Wang J."/>
            <person name="Yan J."/>
            <person name="Yang H."/>
            <person name="Wang X."/>
            <person name="Gao G.F."/>
            <person name="Yang R."/>
            <person name="Wang J."/>
            <person name="Yu J."/>
        </authorList>
    </citation>
    <scope>NUCLEOTIDE SEQUENCE [LARGE SCALE GENOMIC DNA]</scope>
    <source>
        <strain>98HAH33</strain>
    </source>
</reference>
<keyword id="KW-0687">Ribonucleoprotein</keyword>
<keyword id="KW-0689">Ribosomal protein</keyword>
<accession>A4VYP1</accession>
<name>RS10_STRS2</name>
<feature type="chain" id="PRO_1000015123" description="Small ribosomal subunit protein uS10">
    <location>
        <begin position="1"/>
        <end position="102"/>
    </location>
</feature>
<protein>
    <recommendedName>
        <fullName evidence="1">Small ribosomal subunit protein uS10</fullName>
    </recommendedName>
    <alternativeName>
        <fullName evidence="2">30S ribosomal protein S10</fullName>
    </alternativeName>
</protein>
<proteinExistence type="inferred from homology"/>
<sequence length="102" mass="11631">MANKKIRIRLKAYEHRTLDTAAAKIVETATRTGAQVAGPVPLPTERSFYTIIRATHKYKDSREQFEMRTHKRLIDIINPTQKTVDALMKLDLPSGVNVEIKL</sequence>
<dbReference type="EMBL" id="CP000408">
    <property type="protein sequence ID" value="ABP91230.1"/>
    <property type="molecule type" value="Genomic_DNA"/>
</dbReference>
<dbReference type="SMR" id="A4VYP1"/>
<dbReference type="KEGG" id="ssv:SSU98_0070"/>
<dbReference type="HOGENOM" id="CLU_122625_1_3_9"/>
<dbReference type="GO" id="GO:1990904">
    <property type="term" value="C:ribonucleoprotein complex"/>
    <property type="evidence" value="ECO:0007669"/>
    <property type="project" value="UniProtKB-KW"/>
</dbReference>
<dbReference type="GO" id="GO:0005840">
    <property type="term" value="C:ribosome"/>
    <property type="evidence" value="ECO:0007669"/>
    <property type="project" value="UniProtKB-KW"/>
</dbReference>
<dbReference type="GO" id="GO:0003735">
    <property type="term" value="F:structural constituent of ribosome"/>
    <property type="evidence" value="ECO:0007669"/>
    <property type="project" value="InterPro"/>
</dbReference>
<dbReference type="GO" id="GO:0000049">
    <property type="term" value="F:tRNA binding"/>
    <property type="evidence" value="ECO:0007669"/>
    <property type="project" value="UniProtKB-UniRule"/>
</dbReference>
<dbReference type="GO" id="GO:0006412">
    <property type="term" value="P:translation"/>
    <property type="evidence" value="ECO:0007669"/>
    <property type="project" value="UniProtKB-UniRule"/>
</dbReference>
<dbReference type="FunFam" id="3.30.70.600:FF:000001">
    <property type="entry name" value="30S ribosomal protein S10"/>
    <property type="match status" value="1"/>
</dbReference>
<dbReference type="Gene3D" id="3.30.70.600">
    <property type="entry name" value="Ribosomal protein S10 domain"/>
    <property type="match status" value="1"/>
</dbReference>
<dbReference type="HAMAP" id="MF_00508">
    <property type="entry name" value="Ribosomal_uS10"/>
    <property type="match status" value="1"/>
</dbReference>
<dbReference type="InterPro" id="IPR001848">
    <property type="entry name" value="Ribosomal_uS10"/>
</dbReference>
<dbReference type="InterPro" id="IPR018268">
    <property type="entry name" value="Ribosomal_uS10_CS"/>
</dbReference>
<dbReference type="InterPro" id="IPR027486">
    <property type="entry name" value="Ribosomal_uS10_dom"/>
</dbReference>
<dbReference type="InterPro" id="IPR036838">
    <property type="entry name" value="Ribosomal_uS10_dom_sf"/>
</dbReference>
<dbReference type="NCBIfam" id="NF001861">
    <property type="entry name" value="PRK00596.1"/>
    <property type="match status" value="1"/>
</dbReference>
<dbReference type="NCBIfam" id="TIGR01049">
    <property type="entry name" value="rpsJ_bact"/>
    <property type="match status" value="1"/>
</dbReference>
<dbReference type="PANTHER" id="PTHR11700">
    <property type="entry name" value="30S RIBOSOMAL PROTEIN S10 FAMILY MEMBER"/>
    <property type="match status" value="1"/>
</dbReference>
<dbReference type="Pfam" id="PF00338">
    <property type="entry name" value="Ribosomal_S10"/>
    <property type="match status" value="1"/>
</dbReference>
<dbReference type="PRINTS" id="PR00971">
    <property type="entry name" value="RIBOSOMALS10"/>
</dbReference>
<dbReference type="SMART" id="SM01403">
    <property type="entry name" value="Ribosomal_S10"/>
    <property type="match status" value="1"/>
</dbReference>
<dbReference type="SUPFAM" id="SSF54999">
    <property type="entry name" value="Ribosomal protein S10"/>
    <property type="match status" value="1"/>
</dbReference>
<dbReference type="PROSITE" id="PS00361">
    <property type="entry name" value="RIBOSOMAL_S10"/>
    <property type="match status" value="1"/>
</dbReference>
<organism>
    <name type="scientific">Streptococcus suis (strain 98HAH33)</name>
    <dbReference type="NCBI Taxonomy" id="391296"/>
    <lineage>
        <taxon>Bacteria</taxon>
        <taxon>Bacillati</taxon>
        <taxon>Bacillota</taxon>
        <taxon>Bacilli</taxon>
        <taxon>Lactobacillales</taxon>
        <taxon>Streptococcaceae</taxon>
        <taxon>Streptococcus</taxon>
    </lineage>
</organism>
<comment type="function">
    <text evidence="1">Involved in the binding of tRNA to the ribosomes.</text>
</comment>
<comment type="subunit">
    <text evidence="1">Part of the 30S ribosomal subunit.</text>
</comment>
<comment type="similarity">
    <text evidence="1">Belongs to the universal ribosomal protein uS10 family.</text>
</comment>